<organism>
    <name type="scientific">Salmonella choleraesuis (strain SC-B67)</name>
    <dbReference type="NCBI Taxonomy" id="321314"/>
    <lineage>
        <taxon>Bacteria</taxon>
        <taxon>Pseudomonadati</taxon>
        <taxon>Pseudomonadota</taxon>
        <taxon>Gammaproteobacteria</taxon>
        <taxon>Enterobacterales</taxon>
        <taxon>Enterobacteriaceae</taxon>
        <taxon>Salmonella</taxon>
    </lineage>
</organism>
<proteinExistence type="inferred from homology"/>
<gene>
    <name type="primary">phnV</name>
    <name type="ordered locus">SCH_0467</name>
</gene>
<sequence length="265" mass="28484">MPIWSPKGRAAAGVVASVLFIVFFFLPLAVILMSSLSQQWNGILPSGFTLNHFVNALHGAAWDALLASLTIGFCASLFALLCGVWAALALRQYGVKTQKWLSMVFYLPSAIPSVSVGLGILVAFSQGPLQMNGTLWIVLTAHFVLISAFTFSNVSTGLARISADIENVASSLGASPWYRLRHVTLPLLMPWMMSALALSLSLSMGELGATMMIYPPGWTTLPVAIFSLTDRGNIADGAALTIVLVAITLLLMMKLERIAKWLGQK</sequence>
<protein>
    <recommendedName>
        <fullName>Putative 2-aminoethylphosphonate transport system permease protein PhnV</fullName>
    </recommendedName>
</protein>
<name>PHNV_SALCH</name>
<reference key="1">
    <citation type="journal article" date="2005" name="Nucleic Acids Res.">
        <title>The genome sequence of Salmonella enterica serovar Choleraesuis, a highly invasive and resistant zoonotic pathogen.</title>
        <authorList>
            <person name="Chiu C.-H."/>
            <person name="Tang P."/>
            <person name="Chu C."/>
            <person name="Hu S."/>
            <person name="Bao Q."/>
            <person name="Yu J."/>
            <person name="Chou Y.-Y."/>
            <person name="Wang H.-S."/>
            <person name="Lee Y.-S."/>
        </authorList>
    </citation>
    <scope>NUCLEOTIDE SEQUENCE [LARGE SCALE GENOMIC DNA]</scope>
    <source>
        <strain>SC-B67</strain>
    </source>
</reference>
<dbReference type="EMBL" id="AE017220">
    <property type="protein sequence ID" value="AAX64373.1"/>
    <property type="molecule type" value="Genomic_DNA"/>
</dbReference>
<dbReference type="RefSeq" id="WP_001539302.1">
    <property type="nucleotide sequence ID" value="NC_006905.1"/>
</dbReference>
<dbReference type="SMR" id="Q57SD8"/>
<dbReference type="KEGG" id="sec:SCH_0467"/>
<dbReference type="HOGENOM" id="CLU_016047_3_2_6"/>
<dbReference type="Proteomes" id="UP000000538">
    <property type="component" value="Chromosome"/>
</dbReference>
<dbReference type="GO" id="GO:0005886">
    <property type="term" value="C:plasma membrane"/>
    <property type="evidence" value="ECO:0007669"/>
    <property type="project" value="UniProtKB-SubCell"/>
</dbReference>
<dbReference type="GO" id="GO:0055085">
    <property type="term" value="P:transmembrane transport"/>
    <property type="evidence" value="ECO:0007669"/>
    <property type="project" value="InterPro"/>
</dbReference>
<dbReference type="CDD" id="cd06261">
    <property type="entry name" value="TM_PBP2"/>
    <property type="match status" value="1"/>
</dbReference>
<dbReference type="FunFam" id="1.10.3720.10:FF:000081">
    <property type="entry name" value="2-aminoethylphosphonate ABC transport system, membrane component PhnV"/>
    <property type="match status" value="1"/>
</dbReference>
<dbReference type="Gene3D" id="1.10.3720.10">
    <property type="entry name" value="MetI-like"/>
    <property type="match status" value="1"/>
</dbReference>
<dbReference type="InterPro" id="IPR017661">
    <property type="entry name" value="AminoethylPonate_ABC_PhnV"/>
</dbReference>
<dbReference type="InterPro" id="IPR000515">
    <property type="entry name" value="MetI-like"/>
</dbReference>
<dbReference type="InterPro" id="IPR035906">
    <property type="entry name" value="MetI-like_sf"/>
</dbReference>
<dbReference type="NCBIfam" id="TIGR03255">
    <property type="entry name" value="PhnV"/>
    <property type="match status" value="1"/>
</dbReference>
<dbReference type="PANTHER" id="PTHR43357">
    <property type="entry name" value="INNER MEMBRANE ABC TRANSPORTER PERMEASE PROTEIN YDCV"/>
    <property type="match status" value="1"/>
</dbReference>
<dbReference type="PANTHER" id="PTHR43357:SF4">
    <property type="entry name" value="INNER MEMBRANE ABC TRANSPORTER PERMEASE PROTEIN YDCV"/>
    <property type="match status" value="1"/>
</dbReference>
<dbReference type="Pfam" id="PF00528">
    <property type="entry name" value="BPD_transp_1"/>
    <property type="match status" value="1"/>
</dbReference>
<dbReference type="SUPFAM" id="SSF161098">
    <property type="entry name" value="MetI-like"/>
    <property type="match status" value="1"/>
</dbReference>
<dbReference type="PROSITE" id="PS50928">
    <property type="entry name" value="ABC_TM1"/>
    <property type="match status" value="1"/>
</dbReference>
<keyword id="KW-0997">Cell inner membrane</keyword>
<keyword id="KW-1003">Cell membrane</keyword>
<keyword id="KW-0472">Membrane</keyword>
<keyword id="KW-0812">Transmembrane</keyword>
<keyword id="KW-1133">Transmembrane helix</keyword>
<keyword id="KW-0813">Transport</keyword>
<feature type="chain" id="PRO_0000286747" description="Putative 2-aminoethylphosphonate transport system permease protein PhnV">
    <location>
        <begin position="1"/>
        <end position="265"/>
    </location>
</feature>
<feature type="transmembrane region" description="Helical" evidence="2">
    <location>
        <begin position="13"/>
        <end position="33"/>
    </location>
</feature>
<feature type="transmembrane region" description="Helical" evidence="2">
    <location>
        <begin position="69"/>
        <end position="89"/>
    </location>
</feature>
<feature type="transmembrane region" description="Helical" evidence="2">
    <location>
        <begin position="104"/>
        <end position="124"/>
    </location>
</feature>
<feature type="transmembrane region" description="Helical" evidence="2">
    <location>
        <begin position="131"/>
        <end position="151"/>
    </location>
</feature>
<feature type="transmembrane region" description="Helical" evidence="2">
    <location>
        <begin position="185"/>
        <end position="205"/>
    </location>
</feature>
<feature type="transmembrane region" description="Helical" evidence="2">
    <location>
        <begin position="233"/>
        <end position="253"/>
    </location>
</feature>
<feature type="domain" description="ABC transmembrane type-1" evidence="2">
    <location>
        <begin position="65"/>
        <end position="253"/>
    </location>
</feature>
<accession>Q57SD8</accession>
<evidence type="ECO:0000250" key="1"/>
<evidence type="ECO:0000255" key="2">
    <source>
        <dbReference type="PROSITE-ProRule" id="PRU00441"/>
    </source>
</evidence>
<evidence type="ECO:0000305" key="3"/>
<comment type="function">
    <text evidence="1">Probably part of the PhnSTUV complex (TC 3.A.1.11.5) involved in 2-aminoethylphosphonate import. Probably responsible for the translocation of the substrate across the membrane (By similarity).</text>
</comment>
<comment type="subcellular location">
    <subcellularLocation>
        <location evidence="3">Cell inner membrane</location>
        <topology evidence="2">Multi-pass membrane protein</topology>
    </subcellularLocation>
</comment>
<comment type="similarity">
    <text evidence="3">Belongs to the binding-protein-dependent transport system permease family.</text>
</comment>